<protein>
    <recommendedName>
        <fullName evidence="1">Replication restart protein PriA</fullName>
    </recommendedName>
    <alternativeName>
        <fullName evidence="1">ATP-dependent DNA helicase PriA</fullName>
        <ecNumber evidence="1">5.6.2.4</ecNumber>
    </alternativeName>
    <alternativeName>
        <fullName evidence="1">DNA 3'-5' helicase PriA</fullName>
    </alternativeName>
</protein>
<gene>
    <name evidence="1" type="primary">priA</name>
    <name type="ordered locus">RF_0858</name>
</gene>
<evidence type="ECO:0000255" key="1">
    <source>
        <dbReference type="HAMAP-Rule" id="MF_00983"/>
    </source>
</evidence>
<accession>Q4UL64</accession>
<comment type="function">
    <text evidence="1">Initiates the restart of stalled replication forks, which reloads the replicative helicase on sites other than the origin of replication. Recognizes and binds to abandoned replication forks and remodels them to uncover a helicase loading site. Promotes assembly of the primosome at these replication forks.</text>
</comment>
<comment type="catalytic activity">
    <reaction evidence="1">
        <text>Couples ATP hydrolysis with the unwinding of duplex DNA by translocating in the 3'-5' direction.</text>
        <dbReference type="EC" id="5.6.2.4"/>
    </reaction>
</comment>
<comment type="catalytic activity">
    <reaction evidence="1">
        <text>ATP + H2O = ADP + phosphate + H(+)</text>
        <dbReference type="Rhea" id="RHEA:13065"/>
        <dbReference type="ChEBI" id="CHEBI:15377"/>
        <dbReference type="ChEBI" id="CHEBI:15378"/>
        <dbReference type="ChEBI" id="CHEBI:30616"/>
        <dbReference type="ChEBI" id="CHEBI:43474"/>
        <dbReference type="ChEBI" id="CHEBI:456216"/>
        <dbReference type="EC" id="5.6.2.4"/>
    </reaction>
</comment>
<comment type="cofactor">
    <cofactor evidence="1">
        <name>Zn(2+)</name>
        <dbReference type="ChEBI" id="CHEBI:29105"/>
    </cofactor>
    <text evidence="1">Binds 2 zinc ions per subunit.</text>
</comment>
<comment type="subunit">
    <text evidence="1">Component of the replication restart primosome.</text>
</comment>
<comment type="similarity">
    <text evidence="1">Belongs to the helicase family. PriA subfamily.</text>
</comment>
<name>PRIA_RICFE</name>
<organism>
    <name type="scientific">Rickettsia felis (strain ATCC VR-1525 / URRWXCal2)</name>
    <name type="common">Rickettsia azadi</name>
    <dbReference type="NCBI Taxonomy" id="315456"/>
    <lineage>
        <taxon>Bacteria</taxon>
        <taxon>Pseudomonadati</taxon>
        <taxon>Pseudomonadota</taxon>
        <taxon>Alphaproteobacteria</taxon>
        <taxon>Rickettsiales</taxon>
        <taxon>Rickettsiaceae</taxon>
        <taxon>Rickettsieae</taxon>
        <taxon>Rickettsia</taxon>
        <taxon>spotted fever group</taxon>
    </lineage>
</organism>
<keyword id="KW-0067">ATP-binding</keyword>
<keyword id="KW-0235">DNA replication</keyword>
<keyword id="KW-0238">DNA-binding</keyword>
<keyword id="KW-0347">Helicase</keyword>
<keyword id="KW-0378">Hydrolase</keyword>
<keyword id="KW-0413">Isomerase</keyword>
<keyword id="KW-0479">Metal-binding</keyword>
<keyword id="KW-0547">Nucleotide-binding</keyword>
<keyword id="KW-0639">Primosome</keyword>
<keyword id="KW-0862">Zinc</keyword>
<proteinExistence type="inferred from homology"/>
<dbReference type="EC" id="5.6.2.4" evidence="1"/>
<dbReference type="EMBL" id="CP000053">
    <property type="protein sequence ID" value="AAY61709.1"/>
    <property type="molecule type" value="Genomic_DNA"/>
</dbReference>
<dbReference type="SMR" id="Q4UL64"/>
<dbReference type="STRING" id="315456.RF_0858"/>
<dbReference type="KEGG" id="rfe:RF_0858"/>
<dbReference type="eggNOG" id="COG1198">
    <property type="taxonomic scope" value="Bacteria"/>
</dbReference>
<dbReference type="HOGENOM" id="CLU_013353_4_0_5"/>
<dbReference type="OrthoDB" id="9759544at2"/>
<dbReference type="Proteomes" id="UP000008548">
    <property type="component" value="Chromosome"/>
</dbReference>
<dbReference type="GO" id="GO:1990077">
    <property type="term" value="C:primosome complex"/>
    <property type="evidence" value="ECO:0007669"/>
    <property type="project" value="UniProtKB-UniRule"/>
</dbReference>
<dbReference type="GO" id="GO:0043138">
    <property type="term" value="F:3'-5' DNA helicase activity"/>
    <property type="evidence" value="ECO:0007669"/>
    <property type="project" value="TreeGrafter"/>
</dbReference>
<dbReference type="GO" id="GO:0005524">
    <property type="term" value="F:ATP binding"/>
    <property type="evidence" value="ECO:0007669"/>
    <property type="project" value="UniProtKB-UniRule"/>
</dbReference>
<dbReference type="GO" id="GO:0016887">
    <property type="term" value="F:ATP hydrolysis activity"/>
    <property type="evidence" value="ECO:0007669"/>
    <property type="project" value="RHEA"/>
</dbReference>
<dbReference type="GO" id="GO:0003677">
    <property type="term" value="F:DNA binding"/>
    <property type="evidence" value="ECO:0007669"/>
    <property type="project" value="UniProtKB-UniRule"/>
</dbReference>
<dbReference type="GO" id="GO:0008270">
    <property type="term" value="F:zinc ion binding"/>
    <property type="evidence" value="ECO:0007669"/>
    <property type="project" value="UniProtKB-UniRule"/>
</dbReference>
<dbReference type="GO" id="GO:0006310">
    <property type="term" value="P:DNA recombination"/>
    <property type="evidence" value="ECO:0007669"/>
    <property type="project" value="InterPro"/>
</dbReference>
<dbReference type="GO" id="GO:0006270">
    <property type="term" value="P:DNA replication initiation"/>
    <property type="evidence" value="ECO:0007669"/>
    <property type="project" value="TreeGrafter"/>
</dbReference>
<dbReference type="GO" id="GO:0006269">
    <property type="term" value="P:DNA replication, synthesis of primer"/>
    <property type="evidence" value="ECO:0007669"/>
    <property type="project" value="UniProtKB-KW"/>
</dbReference>
<dbReference type="GO" id="GO:0006302">
    <property type="term" value="P:double-strand break repair"/>
    <property type="evidence" value="ECO:0007669"/>
    <property type="project" value="InterPro"/>
</dbReference>
<dbReference type="CDD" id="cd17929">
    <property type="entry name" value="DEXHc_priA"/>
    <property type="match status" value="1"/>
</dbReference>
<dbReference type="CDD" id="cd18804">
    <property type="entry name" value="SF2_C_priA"/>
    <property type="match status" value="1"/>
</dbReference>
<dbReference type="FunFam" id="3.40.50.300:FF:000489">
    <property type="entry name" value="Primosome assembly protein PriA"/>
    <property type="match status" value="1"/>
</dbReference>
<dbReference type="Gene3D" id="3.40.50.300">
    <property type="entry name" value="P-loop containing nucleotide triphosphate hydrolases"/>
    <property type="match status" value="2"/>
</dbReference>
<dbReference type="Gene3D" id="3.40.1440.60">
    <property type="entry name" value="PriA, 3(prime) DNA-binding domain"/>
    <property type="match status" value="1"/>
</dbReference>
<dbReference type="HAMAP" id="MF_00983">
    <property type="entry name" value="PriA"/>
    <property type="match status" value="1"/>
</dbReference>
<dbReference type="InterPro" id="IPR011545">
    <property type="entry name" value="DEAD/DEAH_box_helicase_dom"/>
</dbReference>
<dbReference type="InterPro" id="IPR014001">
    <property type="entry name" value="Helicase_ATP-bd"/>
</dbReference>
<dbReference type="InterPro" id="IPR001650">
    <property type="entry name" value="Helicase_C-like"/>
</dbReference>
<dbReference type="InterPro" id="IPR027417">
    <property type="entry name" value="P-loop_NTPase"/>
</dbReference>
<dbReference type="InterPro" id="IPR005259">
    <property type="entry name" value="PriA"/>
</dbReference>
<dbReference type="InterPro" id="IPR041222">
    <property type="entry name" value="PriA_3primeBD"/>
</dbReference>
<dbReference type="InterPro" id="IPR042115">
    <property type="entry name" value="PriA_3primeBD_sf"/>
</dbReference>
<dbReference type="InterPro" id="IPR041236">
    <property type="entry name" value="PriA_C"/>
</dbReference>
<dbReference type="InterPro" id="IPR040498">
    <property type="entry name" value="PriA_CRR"/>
</dbReference>
<dbReference type="InterPro" id="IPR050880">
    <property type="entry name" value="PriA_helicase"/>
</dbReference>
<dbReference type="NCBIfam" id="TIGR00595">
    <property type="entry name" value="priA"/>
    <property type="match status" value="1"/>
</dbReference>
<dbReference type="NCBIfam" id="NF004072">
    <property type="entry name" value="PRK05580.2-4"/>
    <property type="match status" value="1"/>
</dbReference>
<dbReference type="PANTHER" id="PTHR30580">
    <property type="entry name" value="PRIMOSOMAL PROTEIN N"/>
    <property type="match status" value="1"/>
</dbReference>
<dbReference type="PANTHER" id="PTHR30580:SF0">
    <property type="entry name" value="PRIMOSOMAL PROTEIN N"/>
    <property type="match status" value="1"/>
</dbReference>
<dbReference type="Pfam" id="PF00270">
    <property type="entry name" value="DEAD"/>
    <property type="match status" value="1"/>
</dbReference>
<dbReference type="Pfam" id="PF00271">
    <property type="entry name" value="Helicase_C"/>
    <property type="match status" value="1"/>
</dbReference>
<dbReference type="Pfam" id="PF17764">
    <property type="entry name" value="PriA_3primeBD"/>
    <property type="match status" value="1"/>
</dbReference>
<dbReference type="Pfam" id="PF18074">
    <property type="entry name" value="PriA_C"/>
    <property type="match status" value="1"/>
</dbReference>
<dbReference type="Pfam" id="PF18319">
    <property type="entry name" value="Zn_ribbon_PriA"/>
    <property type="match status" value="1"/>
</dbReference>
<dbReference type="SMART" id="SM00487">
    <property type="entry name" value="DEXDc"/>
    <property type="match status" value="1"/>
</dbReference>
<dbReference type="SMART" id="SM00490">
    <property type="entry name" value="HELICc"/>
    <property type="match status" value="1"/>
</dbReference>
<dbReference type="SUPFAM" id="SSF52540">
    <property type="entry name" value="P-loop containing nucleoside triphosphate hydrolases"/>
    <property type="match status" value="2"/>
</dbReference>
<dbReference type="PROSITE" id="PS51192">
    <property type="entry name" value="HELICASE_ATP_BIND_1"/>
    <property type="match status" value="1"/>
</dbReference>
<dbReference type="PROSITE" id="PS51194">
    <property type="entry name" value="HELICASE_CTER"/>
    <property type="match status" value="1"/>
</dbReference>
<feature type="chain" id="PRO_0000281070" description="Replication restart protein PriA">
    <location>
        <begin position="1"/>
        <end position="648"/>
    </location>
</feature>
<feature type="domain" description="Helicase ATP-binding" evidence="1">
    <location>
        <begin position="131"/>
        <end position="297"/>
    </location>
</feature>
<feature type="domain" description="Helicase C-terminal" evidence="1">
    <location>
        <begin position="393"/>
        <end position="548"/>
    </location>
</feature>
<feature type="short sequence motif" description="DEAH box" evidence="1">
    <location>
        <begin position="240"/>
        <end position="243"/>
    </location>
</feature>
<feature type="binding site" evidence="1">
    <location>
        <begin position="144"/>
        <end position="151"/>
    </location>
    <ligand>
        <name>ATP</name>
        <dbReference type="ChEBI" id="CHEBI:30616"/>
    </ligand>
</feature>
<feature type="binding site" evidence="1">
    <location>
        <position position="358"/>
    </location>
    <ligand>
        <name>Zn(2+)</name>
        <dbReference type="ChEBI" id="CHEBI:29105"/>
        <label>1</label>
    </ligand>
</feature>
<feature type="binding site" evidence="1">
    <location>
        <position position="361"/>
    </location>
    <ligand>
        <name>Zn(2+)</name>
        <dbReference type="ChEBI" id="CHEBI:29105"/>
        <label>1</label>
    </ligand>
</feature>
<feature type="binding site" evidence="1">
    <location>
        <position position="367"/>
    </location>
    <ligand>
        <name>Zn(2+)</name>
        <dbReference type="ChEBI" id="CHEBI:29105"/>
        <label>2</label>
    </ligand>
</feature>
<feature type="binding site" evidence="1">
    <location>
        <position position="370"/>
    </location>
    <ligand>
        <name>Zn(2+)</name>
        <dbReference type="ChEBI" id="CHEBI:29105"/>
        <label>2</label>
    </ligand>
</feature>
<feature type="binding site" evidence="1">
    <location>
        <position position="385"/>
    </location>
    <ligand>
        <name>Zn(2+)</name>
        <dbReference type="ChEBI" id="CHEBI:29105"/>
        <label>2</label>
    </ligand>
</feature>
<feature type="binding site" evidence="1">
    <location>
        <position position="388"/>
    </location>
    <ligand>
        <name>Zn(2+)</name>
        <dbReference type="ChEBI" id="CHEBI:29105"/>
        <label>2</label>
    </ligand>
</feature>
<feature type="binding site" evidence="1">
    <location>
        <position position="398"/>
    </location>
    <ligand>
        <name>Zn(2+)</name>
        <dbReference type="ChEBI" id="CHEBI:29105"/>
        <label>1</label>
    </ligand>
</feature>
<feature type="binding site" evidence="1">
    <location>
        <position position="401"/>
    </location>
    <ligand>
        <name>Zn(2+)</name>
        <dbReference type="ChEBI" id="CHEBI:29105"/>
        <label>1</label>
    </ligand>
</feature>
<sequence length="648" mass="72948">MRIAKILLPAAKLFPLDYLIPESLVLNIGDLVIVPFRSKELTGIVWEFATIPEASKLKTVKEKVPLDLSITSEVLELIKWLSSYYMSELGSIAKLVLPIDIAEKPIKVKEQKVNNSFVLPDLSEEQKQAVTILNESNKPTLIKGVTGSGKTEIYFHLIADYLVKGKQVLIMLPEIALSTQIINRFIERFGFEPIIWNSSVTKAQKKMILRGILSDKVKVVIGARSSLFLPFKNLGLVVIDEEHDDSYKQDDGILYNARDTAIVRGTFDKAQIVLCSATPSIETMYNIEIGKYQLVTLVNRYNNVDLPNIEIIDMTKEKLSKNSYLSKILIEAIKDNLDNKKQVLLFLNRRGYAPLMLCKACGHRFTCKFCSSWMVVHKATKKLECHHCGYQSKIFSSCPECLEDETLTICGPGIERIEEEAKALFPENKIAVISKDHAKNPERIAQLLHQMENLEIDILIGTQMITKGYHFPNLTLVGVIDADLGSNNADLRASERTFQLLHQVGGRAGRGDGKGVVYLQSYYPDNIIFSYVKAGDEDSFFANELEIRKSADMPPFSKTASVILSGSNESKILEIARAMVRIAPKANVKILGPASSLMSKLAGKYRYRILIIADKKFNLQKYLKFWLSLIKIPSFCHLKIDIDPKSFY</sequence>
<reference key="1">
    <citation type="journal article" date="2005" name="PLoS Biol.">
        <title>The genome sequence of Rickettsia felis identifies the first putative conjugative plasmid in an obligate intracellular parasite.</title>
        <authorList>
            <person name="Ogata H."/>
            <person name="Renesto P."/>
            <person name="Audic S."/>
            <person name="Robert C."/>
            <person name="Blanc G."/>
            <person name="Fournier P.-E."/>
            <person name="Parinello H."/>
            <person name="Claverie J.-M."/>
            <person name="Raoult D."/>
        </authorList>
    </citation>
    <scope>NUCLEOTIDE SEQUENCE [LARGE SCALE GENOMIC DNA]</scope>
    <source>
        <strain>ATCC VR-1525 / URRWXCal2</strain>
    </source>
</reference>